<gene>
    <name evidence="1" type="primary">rplB</name>
    <name type="ordered locus">YPO0213</name>
    <name type="ordered locus">y3993</name>
    <name type="ordered locus">YP_0210</name>
</gene>
<evidence type="ECO:0000255" key="1">
    <source>
        <dbReference type="HAMAP-Rule" id="MF_01320"/>
    </source>
</evidence>
<evidence type="ECO:0000256" key="2">
    <source>
        <dbReference type="SAM" id="MobiDB-lite"/>
    </source>
</evidence>
<evidence type="ECO:0000305" key="3"/>
<comment type="function">
    <text evidence="1">One of the primary rRNA binding proteins. Required for association of the 30S and 50S subunits to form the 70S ribosome, for tRNA binding and peptide bond formation. It has been suggested to have peptidyltransferase activity; this is somewhat controversial. Makes several contacts with the 16S rRNA in the 70S ribosome.</text>
</comment>
<comment type="subunit">
    <text evidence="1">Part of the 50S ribosomal subunit. Forms a bridge to the 30S subunit in the 70S ribosome.</text>
</comment>
<comment type="similarity">
    <text evidence="1">Belongs to the universal ribosomal protein uL2 family.</text>
</comment>
<name>RL2_YERPE</name>
<feature type="chain" id="PRO_0000129658" description="Large ribosomal subunit protein uL2">
    <location>
        <begin position="1"/>
        <end position="274"/>
    </location>
</feature>
<feature type="region of interest" description="Disordered" evidence="2">
    <location>
        <begin position="221"/>
        <end position="274"/>
    </location>
</feature>
<sequence length="274" mass="30073">MAIVKCKPTSPGRRHVVKVVNPELHKGKPYAPLLEKLSKSGGRNNNGRITTRHIGGGHKQHYRLVDFKRNKDGIPAVVERLEYDPNRSANIALVLYKDGERRYILAPKGLKAGDQIQSGVDAAIKAGNTLPMRNIPVGSTVHNVEMKPGKGGQLARSAGAYVQIVARDGSYVTLRLRSGEMRKVQADCRATLGEVGNAEHMLRVLGKAGASRWRGIRPTVRGTAMNPVDHPHGGGEGRNFGKHPVTPWGVQTKGKKTRSNKRTDKFIVRRRSKK</sequence>
<organism>
    <name type="scientific">Yersinia pestis</name>
    <dbReference type="NCBI Taxonomy" id="632"/>
    <lineage>
        <taxon>Bacteria</taxon>
        <taxon>Pseudomonadati</taxon>
        <taxon>Pseudomonadota</taxon>
        <taxon>Gammaproteobacteria</taxon>
        <taxon>Enterobacterales</taxon>
        <taxon>Yersiniaceae</taxon>
        <taxon>Yersinia</taxon>
    </lineage>
</organism>
<accession>P60436</accession>
<accession>P11255</accession>
<accession>Q0WK95</accession>
<protein>
    <recommendedName>
        <fullName evidence="1">Large ribosomal subunit protein uL2</fullName>
    </recommendedName>
    <alternativeName>
        <fullName evidence="3">50S ribosomal protein L2</fullName>
    </alternativeName>
</protein>
<reference key="1">
    <citation type="journal article" date="2001" name="Nature">
        <title>Genome sequence of Yersinia pestis, the causative agent of plague.</title>
        <authorList>
            <person name="Parkhill J."/>
            <person name="Wren B.W."/>
            <person name="Thomson N.R."/>
            <person name="Titball R.W."/>
            <person name="Holden M.T.G."/>
            <person name="Prentice M.B."/>
            <person name="Sebaihia M."/>
            <person name="James K.D."/>
            <person name="Churcher C.M."/>
            <person name="Mungall K.L."/>
            <person name="Baker S."/>
            <person name="Basham D."/>
            <person name="Bentley S.D."/>
            <person name="Brooks K."/>
            <person name="Cerdeno-Tarraga A.-M."/>
            <person name="Chillingworth T."/>
            <person name="Cronin A."/>
            <person name="Davies R.M."/>
            <person name="Davis P."/>
            <person name="Dougan G."/>
            <person name="Feltwell T."/>
            <person name="Hamlin N."/>
            <person name="Holroyd S."/>
            <person name="Jagels K."/>
            <person name="Karlyshev A.V."/>
            <person name="Leather S."/>
            <person name="Moule S."/>
            <person name="Oyston P.C.F."/>
            <person name="Quail M.A."/>
            <person name="Rutherford K.M."/>
            <person name="Simmonds M."/>
            <person name="Skelton J."/>
            <person name="Stevens K."/>
            <person name="Whitehead S."/>
            <person name="Barrell B.G."/>
        </authorList>
    </citation>
    <scope>NUCLEOTIDE SEQUENCE [LARGE SCALE GENOMIC DNA]</scope>
    <source>
        <strain>CO-92 / Biovar Orientalis</strain>
    </source>
</reference>
<reference key="2">
    <citation type="journal article" date="2002" name="J. Bacteriol.">
        <title>Genome sequence of Yersinia pestis KIM.</title>
        <authorList>
            <person name="Deng W."/>
            <person name="Burland V."/>
            <person name="Plunkett G. III"/>
            <person name="Boutin A."/>
            <person name="Mayhew G.F."/>
            <person name="Liss P."/>
            <person name="Perna N.T."/>
            <person name="Rose D.J."/>
            <person name="Mau B."/>
            <person name="Zhou S."/>
            <person name="Schwartz D.C."/>
            <person name="Fetherston J.D."/>
            <person name="Lindler L.E."/>
            <person name="Brubaker R.R."/>
            <person name="Plano G.V."/>
            <person name="Straley S.C."/>
            <person name="McDonough K.A."/>
            <person name="Nilles M.L."/>
            <person name="Matson J.S."/>
            <person name="Blattner F.R."/>
            <person name="Perry R.D."/>
        </authorList>
    </citation>
    <scope>NUCLEOTIDE SEQUENCE [LARGE SCALE GENOMIC DNA]</scope>
    <source>
        <strain>KIM10+ / Biovar Mediaevalis</strain>
    </source>
</reference>
<reference key="3">
    <citation type="journal article" date="2004" name="DNA Res.">
        <title>Complete genome sequence of Yersinia pestis strain 91001, an isolate avirulent to humans.</title>
        <authorList>
            <person name="Song Y."/>
            <person name="Tong Z."/>
            <person name="Wang J."/>
            <person name="Wang L."/>
            <person name="Guo Z."/>
            <person name="Han Y."/>
            <person name="Zhang J."/>
            <person name="Pei D."/>
            <person name="Zhou D."/>
            <person name="Qin H."/>
            <person name="Pang X."/>
            <person name="Han Y."/>
            <person name="Zhai J."/>
            <person name="Li M."/>
            <person name="Cui B."/>
            <person name="Qi Z."/>
            <person name="Jin L."/>
            <person name="Dai R."/>
            <person name="Chen F."/>
            <person name="Li S."/>
            <person name="Ye C."/>
            <person name="Du Z."/>
            <person name="Lin W."/>
            <person name="Wang J."/>
            <person name="Yu J."/>
            <person name="Yang H."/>
            <person name="Wang J."/>
            <person name="Huang P."/>
            <person name="Yang R."/>
        </authorList>
    </citation>
    <scope>NUCLEOTIDE SEQUENCE [LARGE SCALE GENOMIC DNA]</scope>
    <source>
        <strain>91001 / Biovar Mediaevalis</strain>
    </source>
</reference>
<keyword id="KW-1185">Reference proteome</keyword>
<keyword id="KW-0687">Ribonucleoprotein</keyword>
<keyword id="KW-0689">Ribosomal protein</keyword>
<keyword id="KW-0694">RNA-binding</keyword>
<keyword id="KW-0699">rRNA-binding</keyword>
<proteinExistence type="inferred from homology"/>
<dbReference type="EMBL" id="AL590842">
    <property type="protein sequence ID" value="CAL18895.1"/>
    <property type="molecule type" value="Genomic_DNA"/>
</dbReference>
<dbReference type="EMBL" id="AE009952">
    <property type="protein sequence ID" value="AAM87537.1"/>
    <property type="molecule type" value="Genomic_DNA"/>
</dbReference>
<dbReference type="EMBL" id="AE017042">
    <property type="protein sequence ID" value="AAS60486.1"/>
    <property type="molecule type" value="Genomic_DNA"/>
</dbReference>
<dbReference type="PIR" id="AE0026">
    <property type="entry name" value="AE0026"/>
</dbReference>
<dbReference type="RefSeq" id="WP_002213425.1">
    <property type="nucleotide sequence ID" value="NZ_WUCM01000078.1"/>
</dbReference>
<dbReference type="RefSeq" id="YP_002345293.1">
    <property type="nucleotide sequence ID" value="NC_003143.1"/>
</dbReference>
<dbReference type="SMR" id="P60436"/>
<dbReference type="STRING" id="214092.YPO0213"/>
<dbReference type="PaxDb" id="214092-YPO0213"/>
<dbReference type="DNASU" id="1148940"/>
<dbReference type="EnsemblBacteria" id="AAS60486">
    <property type="protein sequence ID" value="AAS60486"/>
    <property type="gene ID" value="YP_0210"/>
</dbReference>
<dbReference type="GeneID" id="97454234"/>
<dbReference type="KEGG" id="ype:YPO0213"/>
<dbReference type="KEGG" id="ypk:y3993"/>
<dbReference type="KEGG" id="ypm:YP_0210"/>
<dbReference type="PATRIC" id="fig|214092.21.peg.442"/>
<dbReference type="eggNOG" id="COG0090">
    <property type="taxonomic scope" value="Bacteria"/>
</dbReference>
<dbReference type="HOGENOM" id="CLU_036235_2_1_6"/>
<dbReference type="OMA" id="GGRHPCT"/>
<dbReference type="OrthoDB" id="9778722at2"/>
<dbReference type="Proteomes" id="UP000000815">
    <property type="component" value="Chromosome"/>
</dbReference>
<dbReference type="Proteomes" id="UP000001019">
    <property type="component" value="Chromosome"/>
</dbReference>
<dbReference type="Proteomes" id="UP000002490">
    <property type="component" value="Chromosome"/>
</dbReference>
<dbReference type="GO" id="GO:0022625">
    <property type="term" value="C:cytosolic large ribosomal subunit"/>
    <property type="evidence" value="ECO:0000318"/>
    <property type="project" value="GO_Central"/>
</dbReference>
<dbReference type="GO" id="GO:0003723">
    <property type="term" value="F:RNA binding"/>
    <property type="evidence" value="ECO:0000318"/>
    <property type="project" value="GO_Central"/>
</dbReference>
<dbReference type="GO" id="GO:0019843">
    <property type="term" value="F:rRNA binding"/>
    <property type="evidence" value="ECO:0007669"/>
    <property type="project" value="UniProtKB-UniRule"/>
</dbReference>
<dbReference type="GO" id="GO:0003735">
    <property type="term" value="F:structural constituent of ribosome"/>
    <property type="evidence" value="ECO:0000318"/>
    <property type="project" value="GO_Central"/>
</dbReference>
<dbReference type="GO" id="GO:0016740">
    <property type="term" value="F:transferase activity"/>
    <property type="evidence" value="ECO:0007669"/>
    <property type="project" value="InterPro"/>
</dbReference>
<dbReference type="GO" id="GO:0002181">
    <property type="term" value="P:cytoplasmic translation"/>
    <property type="evidence" value="ECO:0000318"/>
    <property type="project" value="GO_Central"/>
</dbReference>
<dbReference type="FunFam" id="2.30.30.30:FF:000001">
    <property type="entry name" value="50S ribosomal protein L2"/>
    <property type="match status" value="1"/>
</dbReference>
<dbReference type="FunFam" id="2.40.50.140:FF:000003">
    <property type="entry name" value="50S ribosomal protein L2"/>
    <property type="match status" value="1"/>
</dbReference>
<dbReference type="FunFam" id="4.10.950.10:FF:000001">
    <property type="entry name" value="50S ribosomal protein L2"/>
    <property type="match status" value="1"/>
</dbReference>
<dbReference type="Gene3D" id="2.30.30.30">
    <property type="match status" value="1"/>
</dbReference>
<dbReference type="Gene3D" id="2.40.50.140">
    <property type="entry name" value="Nucleic acid-binding proteins"/>
    <property type="match status" value="1"/>
</dbReference>
<dbReference type="Gene3D" id="4.10.950.10">
    <property type="entry name" value="Ribosomal protein L2, domain 3"/>
    <property type="match status" value="1"/>
</dbReference>
<dbReference type="HAMAP" id="MF_01320_B">
    <property type="entry name" value="Ribosomal_uL2_B"/>
    <property type="match status" value="1"/>
</dbReference>
<dbReference type="InterPro" id="IPR012340">
    <property type="entry name" value="NA-bd_OB-fold"/>
</dbReference>
<dbReference type="InterPro" id="IPR014722">
    <property type="entry name" value="Rib_uL2_dom2"/>
</dbReference>
<dbReference type="InterPro" id="IPR002171">
    <property type="entry name" value="Ribosomal_uL2"/>
</dbReference>
<dbReference type="InterPro" id="IPR005880">
    <property type="entry name" value="Ribosomal_uL2_bac/org-type"/>
</dbReference>
<dbReference type="InterPro" id="IPR022669">
    <property type="entry name" value="Ribosomal_uL2_C"/>
</dbReference>
<dbReference type="InterPro" id="IPR022671">
    <property type="entry name" value="Ribosomal_uL2_CS"/>
</dbReference>
<dbReference type="InterPro" id="IPR014726">
    <property type="entry name" value="Ribosomal_uL2_dom3"/>
</dbReference>
<dbReference type="InterPro" id="IPR022666">
    <property type="entry name" value="Ribosomal_uL2_RNA-bd_dom"/>
</dbReference>
<dbReference type="InterPro" id="IPR008991">
    <property type="entry name" value="Translation_prot_SH3-like_sf"/>
</dbReference>
<dbReference type="NCBIfam" id="TIGR01171">
    <property type="entry name" value="rplB_bact"/>
    <property type="match status" value="1"/>
</dbReference>
<dbReference type="PANTHER" id="PTHR13691:SF5">
    <property type="entry name" value="LARGE RIBOSOMAL SUBUNIT PROTEIN UL2M"/>
    <property type="match status" value="1"/>
</dbReference>
<dbReference type="PANTHER" id="PTHR13691">
    <property type="entry name" value="RIBOSOMAL PROTEIN L2"/>
    <property type="match status" value="1"/>
</dbReference>
<dbReference type="Pfam" id="PF00181">
    <property type="entry name" value="Ribosomal_L2"/>
    <property type="match status" value="1"/>
</dbReference>
<dbReference type="Pfam" id="PF03947">
    <property type="entry name" value="Ribosomal_L2_C"/>
    <property type="match status" value="1"/>
</dbReference>
<dbReference type="PIRSF" id="PIRSF002158">
    <property type="entry name" value="Ribosomal_L2"/>
    <property type="match status" value="1"/>
</dbReference>
<dbReference type="SMART" id="SM01383">
    <property type="entry name" value="Ribosomal_L2"/>
    <property type="match status" value="1"/>
</dbReference>
<dbReference type="SMART" id="SM01382">
    <property type="entry name" value="Ribosomal_L2_C"/>
    <property type="match status" value="1"/>
</dbReference>
<dbReference type="SUPFAM" id="SSF50249">
    <property type="entry name" value="Nucleic acid-binding proteins"/>
    <property type="match status" value="1"/>
</dbReference>
<dbReference type="SUPFAM" id="SSF50104">
    <property type="entry name" value="Translation proteins SH3-like domain"/>
    <property type="match status" value="1"/>
</dbReference>
<dbReference type="PROSITE" id="PS00467">
    <property type="entry name" value="RIBOSOMAL_L2"/>
    <property type="match status" value="1"/>
</dbReference>